<reference key="1">
    <citation type="journal article" date="1992" name="Development">
        <title>Expression of a novel FGF in the Xenopus embryo. A new candidate inducing factor for mesoderm formation and anteroposterior specification.</title>
        <authorList>
            <person name="Isaacs H.V."/>
            <person name="Tannahill D."/>
            <person name="Slack J.M.W."/>
        </authorList>
    </citation>
    <scope>NUCLEOTIDE SEQUENCE [MRNA]</scope>
    <scope>FUNCTION</scope>
</reference>
<reference key="2">
    <citation type="journal article" date="1999" name="Development">
        <title>derriere: a TGF-beta family member required for posterior development in Xenopus.</title>
        <authorList>
            <person name="Sun B.I."/>
            <person name="Bush S.M."/>
            <person name="Collins-Racie L.A."/>
            <person name="LaVallie E.R."/>
            <person name="DiBlasio-Smith E.A."/>
            <person name="Wolfman N.M."/>
            <person name="McCoy J.M."/>
            <person name="Sive H.L."/>
        </authorList>
    </citation>
    <scope>INDUCTION</scope>
</reference>
<feature type="signal peptide" evidence="1">
    <location>
        <begin position="1"/>
        <end position="22"/>
    </location>
</feature>
<feature type="chain" id="PRO_0000008956" description="Fibroblast growth factor 4A">
    <location>
        <begin position="23"/>
        <end position="187"/>
    </location>
</feature>
<keyword id="KW-0217">Developmental protein</keyword>
<keyword id="KW-0221">Differentiation</keyword>
<keyword id="KW-0339">Growth factor</keyword>
<keyword id="KW-0497">Mitogen</keyword>
<keyword id="KW-1185">Reference proteome</keyword>
<keyword id="KW-0964">Secreted</keyword>
<keyword id="KW-0732">Signal</keyword>
<dbReference type="EMBL" id="X62593">
    <property type="protein sequence ID" value="CAA44479.1"/>
    <property type="molecule type" value="mRNA"/>
</dbReference>
<dbReference type="PIR" id="S23595">
    <property type="entry name" value="S23595"/>
</dbReference>
<dbReference type="SMR" id="P48805"/>
<dbReference type="GeneID" id="378586"/>
<dbReference type="KEGG" id="xla:378586"/>
<dbReference type="AGR" id="Xenbase:XB-GENE-6252641"/>
<dbReference type="CTD" id="378586"/>
<dbReference type="Xenbase" id="XB-GENE-6252641">
    <property type="gene designation" value="fgf4.L"/>
</dbReference>
<dbReference type="OrthoDB" id="5960247at2759"/>
<dbReference type="Proteomes" id="UP000186698">
    <property type="component" value="Chromosome 4L"/>
</dbReference>
<dbReference type="Bgee" id="378586">
    <property type="expression patterns" value="Expressed in muscle tissue and 2 other cell types or tissues"/>
</dbReference>
<dbReference type="GO" id="GO:0005737">
    <property type="term" value="C:cytoplasm"/>
    <property type="evidence" value="ECO:0000318"/>
    <property type="project" value="GO_Central"/>
</dbReference>
<dbReference type="GO" id="GO:0005615">
    <property type="term" value="C:extracellular space"/>
    <property type="evidence" value="ECO:0000318"/>
    <property type="project" value="GO_Central"/>
</dbReference>
<dbReference type="GO" id="GO:0005104">
    <property type="term" value="F:fibroblast growth factor receptor binding"/>
    <property type="evidence" value="ECO:0000318"/>
    <property type="project" value="GO_Central"/>
</dbReference>
<dbReference type="GO" id="GO:0008083">
    <property type="term" value="F:growth factor activity"/>
    <property type="evidence" value="ECO:0000318"/>
    <property type="project" value="GO_Central"/>
</dbReference>
<dbReference type="GO" id="GO:0008543">
    <property type="term" value="P:fibroblast growth factor receptor signaling pathway"/>
    <property type="evidence" value="ECO:0000318"/>
    <property type="project" value="GO_Central"/>
</dbReference>
<dbReference type="GO" id="GO:0022008">
    <property type="term" value="P:neurogenesis"/>
    <property type="evidence" value="ECO:0000318"/>
    <property type="project" value="GO_Central"/>
</dbReference>
<dbReference type="GO" id="GO:0051781">
    <property type="term" value="P:positive regulation of cell division"/>
    <property type="evidence" value="ECO:0007669"/>
    <property type="project" value="UniProtKB-KW"/>
</dbReference>
<dbReference type="GO" id="GO:0008284">
    <property type="term" value="P:positive regulation of cell population proliferation"/>
    <property type="evidence" value="ECO:0000318"/>
    <property type="project" value="GO_Central"/>
</dbReference>
<dbReference type="GO" id="GO:0043410">
    <property type="term" value="P:positive regulation of MAPK cascade"/>
    <property type="evidence" value="ECO:0000318"/>
    <property type="project" value="GO_Central"/>
</dbReference>
<dbReference type="GO" id="GO:0030334">
    <property type="term" value="P:regulation of cell migration"/>
    <property type="evidence" value="ECO:0000318"/>
    <property type="project" value="GO_Central"/>
</dbReference>
<dbReference type="GO" id="GO:0080159">
    <property type="term" value="P:zygote elongation"/>
    <property type="evidence" value="ECO:0000315"/>
    <property type="project" value="BHF-UCL"/>
</dbReference>
<dbReference type="CDD" id="cd23316">
    <property type="entry name" value="beta-trefoil_FGF4"/>
    <property type="match status" value="1"/>
</dbReference>
<dbReference type="FunFam" id="2.80.10.50:FF:000033">
    <property type="entry name" value="Fibroblast growth factor"/>
    <property type="match status" value="1"/>
</dbReference>
<dbReference type="Gene3D" id="2.80.10.50">
    <property type="match status" value="1"/>
</dbReference>
<dbReference type="InterPro" id="IPR002209">
    <property type="entry name" value="Fibroblast_GF_fam"/>
</dbReference>
<dbReference type="InterPro" id="IPR008996">
    <property type="entry name" value="IL1/FGF"/>
</dbReference>
<dbReference type="PANTHER" id="PTHR11486">
    <property type="entry name" value="FIBROBLAST GROWTH FACTOR"/>
    <property type="match status" value="1"/>
</dbReference>
<dbReference type="Pfam" id="PF00167">
    <property type="entry name" value="FGF"/>
    <property type="match status" value="1"/>
</dbReference>
<dbReference type="PRINTS" id="PR00263">
    <property type="entry name" value="HBGFFGF"/>
</dbReference>
<dbReference type="PRINTS" id="PR00262">
    <property type="entry name" value="IL1HBGF"/>
</dbReference>
<dbReference type="SMART" id="SM00442">
    <property type="entry name" value="FGF"/>
    <property type="match status" value="1"/>
</dbReference>
<dbReference type="SUPFAM" id="SSF50353">
    <property type="entry name" value="Cytokine"/>
    <property type="match status" value="1"/>
</dbReference>
<dbReference type="PROSITE" id="PS00247">
    <property type="entry name" value="HBGF_FGF"/>
    <property type="match status" value="1"/>
</dbReference>
<name>FGF4A_XENLA</name>
<proteinExistence type="evidence at transcript level"/>
<sequence length="187" mass="21223">MTVPSALVPILLLGTAAVMVQCLPLSFQRNDTVERRWETLFSRSMGEKKDTSRDSDYLLGIKRQRRLYCNVGIGFHIQVLPDGRINGMHSENRYSLLELSPVEVGVVSLYGVKSGMFVAMNAKGKLYGSRYFNEECKFKETLLPNNYNAYESRKYPGMYIALGKNGRTKKGNRVSPTMTLTHFLPRI</sequence>
<protein>
    <recommendedName>
        <fullName>Fibroblast growth factor 4A</fullName>
        <shortName>FGF-4A</shortName>
    </recommendedName>
    <alternativeName>
        <fullName>Embryonic fibroblast growth factor I</fullName>
        <shortName>xEFGF-I</shortName>
    </alternativeName>
    <alternativeName>
        <fullName>Heparin-binding growth factor 4-I</fullName>
        <shortName>HBGF-4-I</shortName>
    </alternativeName>
</protein>
<gene>
    <name type="primary">fgf4-a</name>
</gene>
<accession>P48805</accession>
<organism>
    <name type="scientific">Xenopus laevis</name>
    <name type="common">African clawed frog</name>
    <dbReference type="NCBI Taxonomy" id="8355"/>
    <lineage>
        <taxon>Eukaryota</taxon>
        <taxon>Metazoa</taxon>
        <taxon>Chordata</taxon>
        <taxon>Craniata</taxon>
        <taxon>Vertebrata</taxon>
        <taxon>Euteleostomi</taxon>
        <taxon>Amphibia</taxon>
        <taxon>Batrachia</taxon>
        <taxon>Anura</taxon>
        <taxon>Pipoidea</taxon>
        <taxon>Pipidae</taxon>
        <taxon>Xenopodinae</taxon>
        <taxon>Xenopus</taxon>
        <taxon>Xenopus</taxon>
    </lineage>
</organism>
<comment type="function">
    <text evidence="3">Plays an important role in the regulation of embryonic development, cell proliferation, and cell differentiation. Good candidate for an inducing factor with possible roles both in mesoderm induction at the blastula stage and in the formation of the anteroposterior axis at the gastrula stage.</text>
</comment>
<comment type="subcellular location">
    <subcellularLocation>
        <location evidence="4">Secreted</location>
    </subcellularLocation>
</comment>
<comment type="induction">
    <text evidence="2">By derriere.</text>
</comment>
<comment type="similarity">
    <text evidence="4">Belongs to the heparin-binding growth factors family.</text>
</comment>
<evidence type="ECO:0000255" key="1"/>
<evidence type="ECO:0000269" key="2">
    <source>
    </source>
</evidence>
<evidence type="ECO:0000269" key="3">
    <source>
    </source>
</evidence>
<evidence type="ECO:0000305" key="4"/>